<name>RL7_STRMK</name>
<proteinExistence type="inferred from homology"/>
<comment type="function">
    <text evidence="1">Forms part of the ribosomal stalk which helps the ribosome interact with GTP-bound translation factors. Is thus essential for accurate translation.</text>
</comment>
<comment type="subunit">
    <text evidence="1">Homodimer. Part of the ribosomal stalk of the 50S ribosomal subunit. Forms a multimeric L10(L12)X complex, where L10 forms an elongated spine to which 2 to 4 L12 dimers bind in a sequential fashion. Binds GTP-bound translation factors.</text>
</comment>
<comment type="similarity">
    <text evidence="1">Belongs to the bacterial ribosomal protein bL12 family.</text>
</comment>
<organism>
    <name type="scientific">Stenotrophomonas maltophilia (strain K279a)</name>
    <dbReference type="NCBI Taxonomy" id="522373"/>
    <lineage>
        <taxon>Bacteria</taxon>
        <taxon>Pseudomonadati</taxon>
        <taxon>Pseudomonadota</taxon>
        <taxon>Gammaproteobacteria</taxon>
        <taxon>Lysobacterales</taxon>
        <taxon>Lysobacteraceae</taxon>
        <taxon>Stenotrophomonas</taxon>
        <taxon>Stenotrophomonas maltophilia group</taxon>
    </lineage>
</organism>
<keyword id="KW-1185">Reference proteome</keyword>
<keyword id="KW-0687">Ribonucleoprotein</keyword>
<keyword id="KW-0689">Ribosomal protein</keyword>
<dbReference type="EMBL" id="AM743169">
    <property type="protein sequence ID" value="CAQ44467.1"/>
    <property type="molecule type" value="Genomic_DNA"/>
</dbReference>
<dbReference type="RefSeq" id="WP_005408204.1">
    <property type="nucleotide sequence ID" value="NC_010943.1"/>
</dbReference>
<dbReference type="SMR" id="B2FQ37"/>
<dbReference type="EnsemblBacteria" id="CAQ44467">
    <property type="protein sequence ID" value="CAQ44467"/>
    <property type="gene ID" value="Smlt0897"/>
</dbReference>
<dbReference type="GeneID" id="93831928"/>
<dbReference type="KEGG" id="sml:Smlt0897"/>
<dbReference type="eggNOG" id="COG0222">
    <property type="taxonomic scope" value="Bacteria"/>
</dbReference>
<dbReference type="HOGENOM" id="CLU_086499_3_0_6"/>
<dbReference type="Proteomes" id="UP000008840">
    <property type="component" value="Chromosome"/>
</dbReference>
<dbReference type="GO" id="GO:0022625">
    <property type="term" value="C:cytosolic large ribosomal subunit"/>
    <property type="evidence" value="ECO:0007669"/>
    <property type="project" value="TreeGrafter"/>
</dbReference>
<dbReference type="GO" id="GO:0003729">
    <property type="term" value="F:mRNA binding"/>
    <property type="evidence" value="ECO:0007669"/>
    <property type="project" value="TreeGrafter"/>
</dbReference>
<dbReference type="GO" id="GO:0003735">
    <property type="term" value="F:structural constituent of ribosome"/>
    <property type="evidence" value="ECO:0007669"/>
    <property type="project" value="InterPro"/>
</dbReference>
<dbReference type="GO" id="GO:0006412">
    <property type="term" value="P:translation"/>
    <property type="evidence" value="ECO:0007669"/>
    <property type="project" value="UniProtKB-UniRule"/>
</dbReference>
<dbReference type="CDD" id="cd00387">
    <property type="entry name" value="Ribosomal_L7_L12"/>
    <property type="match status" value="1"/>
</dbReference>
<dbReference type="FunFam" id="1.20.5.710:FF:000003">
    <property type="entry name" value="50S ribosomal protein L7/L12"/>
    <property type="match status" value="1"/>
</dbReference>
<dbReference type="FunFam" id="3.30.1390.10:FF:000001">
    <property type="entry name" value="50S ribosomal protein L7/L12"/>
    <property type="match status" value="1"/>
</dbReference>
<dbReference type="Gene3D" id="3.30.1390.10">
    <property type="match status" value="1"/>
</dbReference>
<dbReference type="Gene3D" id="1.20.5.710">
    <property type="entry name" value="Single helix bin"/>
    <property type="match status" value="1"/>
</dbReference>
<dbReference type="HAMAP" id="MF_00368">
    <property type="entry name" value="Ribosomal_bL12"/>
    <property type="match status" value="1"/>
</dbReference>
<dbReference type="InterPro" id="IPR000206">
    <property type="entry name" value="Ribosomal_bL12"/>
</dbReference>
<dbReference type="InterPro" id="IPR013823">
    <property type="entry name" value="Ribosomal_bL12_C"/>
</dbReference>
<dbReference type="InterPro" id="IPR014719">
    <property type="entry name" value="Ribosomal_bL12_C/ClpS-like"/>
</dbReference>
<dbReference type="InterPro" id="IPR008932">
    <property type="entry name" value="Ribosomal_bL12_oligo"/>
</dbReference>
<dbReference type="InterPro" id="IPR036235">
    <property type="entry name" value="Ribosomal_bL12_oligo_N_sf"/>
</dbReference>
<dbReference type="NCBIfam" id="TIGR00855">
    <property type="entry name" value="L12"/>
    <property type="match status" value="1"/>
</dbReference>
<dbReference type="PANTHER" id="PTHR45987">
    <property type="entry name" value="39S RIBOSOMAL PROTEIN L12"/>
    <property type="match status" value="1"/>
</dbReference>
<dbReference type="PANTHER" id="PTHR45987:SF4">
    <property type="entry name" value="LARGE RIBOSOMAL SUBUNIT PROTEIN BL12M"/>
    <property type="match status" value="1"/>
</dbReference>
<dbReference type="Pfam" id="PF00542">
    <property type="entry name" value="Ribosomal_L12"/>
    <property type="match status" value="1"/>
</dbReference>
<dbReference type="Pfam" id="PF16320">
    <property type="entry name" value="Ribosomal_L12_N"/>
    <property type="match status" value="1"/>
</dbReference>
<dbReference type="SUPFAM" id="SSF54736">
    <property type="entry name" value="ClpS-like"/>
    <property type="match status" value="1"/>
</dbReference>
<dbReference type="SUPFAM" id="SSF48300">
    <property type="entry name" value="Ribosomal protein L7/12, oligomerisation (N-terminal) domain"/>
    <property type="match status" value="1"/>
</dbReference>
<evidence type="ECO:0000255" key="1">
    <source>
        <dbReference type="HAMAP-Rule" id="MF_00368"/>
    </source>
</evidence>
<evidence type="ECO:0000305" key="2"/>
<reference key="1">
    <citation type="journal article" date="2008" name="Genome Biol.">
        <title>The complete genome, comparative and functional analysis of Stenotrophomonas maltophilia reveals an organism heavily shielded by drug resistance determinants.</title>
        <authorList>
            <person name="Crossman L.C."/>
            <person name="Gould V.C."/>
            <person name="Dow J.M."/>
            <person name="Vernikos G.S."/>
            <person name="Okazaki A."/>
            <person name="Sebaihia M."/>
            <person name="Saunders D."/>
            <person name="Arrowsmith C."/>
            <person name="Carver T."/>
            <person name="Peters N."/>
            <person name="Adlem E."/>
            <person name="Kerhornou A."/>
            <person name="Lord A."/>
            <person name="Murphy L."/>
            <person name="Seeger K."/>
            <person name="Squares R."/>
            <person name="Rutter S."/>
            <person name="Quail M.A."/>
            <person name="Rajandream M.A."/>
            <person name="Harris D."/>
            <person name="Churcher C."/>
            <person name="Bentley S.D."/>
            <person name="Parkhill J."/>
            <person name="Thomson N.R."/>
            <person name="Avison M.B."/>
        </authorList>
    </citation>
    <scope>NUCLEOTIDE SEQUENCE [LARGE SCALE GENOMIC DNA]</scope>
    <source>
        <strain>K279a</strain>
    </source>
</reference>
<gene>
    <name evidence="1" type="primary">rplL</name>
    <name type="ordered locus">Smlt0897</name>
</gene>
<feature type="chain" id="PRO_1000121493" description="Large ribosomal subunit protein bL12">
    <location>
        <begin position="1"/>
        <end position="122"/>
    </location>
</feature>
<sequence>MSLTNEQIVDAIAEKSLMEVMELVKAIEEKFGVSAAAPVAVAAAAGPAAAVEEQTEFTVTLKSAGDKKVEVIKAVRAITGLGLKEAKDLAEAGGVLKEGASKEDAEKMKKDLEAAGATVEVK</sequence>
<protein>
    <recommendedName>
        <fullName evidence="1">Large ribosomal subunit protein bL12</fullName>
    </recommendedName>
    <alternativeName>
        <fullName evidence="2">50S ribosomal protein L7/L12</fullName>
    </alternativeName>
</protein>
<accession>B2FQ37</accession>